<protein>
    <recommendedName>
        <fullName evidence="1">Adenylate kinase</fullName>
        <shortName evidence="1">AK</shortName>
        <ecNumber evidence="1">2.7.4.3</ecNumber>
    </recommendedName>
    <alternativeName>
        <fullName evidence="1">ATP-AMP transphosphorylase</fullName>
    </alternativeName>
    <alternativeName>
        <fullName evidence="1">ATP:AMP phosphotransferase</fullName>
    </alternativeName>
    <alternativeName>
        <fullName evidence="1">Adenylate monophosphate kinase</fullName>
    </alternativeName>
</protein>
<accession>Q14H66</accession>
<gene>
    <name evidence="1" type="primary">adk</name>
    <name type="ordered locus">FTF1161</name>
</gene>
<comment type="function">
    <text evidence="1">Catalyzes the reversible transfer of the terminal phosphate group between ATP and AMP. Plays an important role in cellular energy homeostasis and in adenine nucleotide metabolism.</text>
</comment>
<comment type="catalytic activity">
    <reaction evidence="1">
        <text>AMP + ATP = 2 ADP</text>
        <dbReference type="Rhea" id="RHEA:12973"/>
        <dbReference type="ChEBI" id="CHEBI:30616"/>
        <dbReference type="ChEBI" id="CHEBI:456215"/>
        <dbReference type="ChEBI" id="CHEBI:456216"/>
        <dbReference type="EC" id="2.7.4.3"/>
    </reaction>
</comment>
<comment type="pathway">
    <text evidence="1">Purine metabolism; AMP biosynthesis via salvage pathway; AMP from ADP: step 1/1.</text>
</comment>
<comment type="subunit">
    <text evidence="1">Monomer.</text>
</comment>
<comment type="subcellular location">
    <subcellularLocation>
        <location evidence="1">Cytoplasm</location>
    </subcellularLocation>
</comment>
<comment type="domain">
    <text evidence="1">Consists of three domains, a large central CORE domain and two small peripheral domains, NMPbind and LID, which undergo movements during catalysis. The LID domain closes over the site of phosphoryl transfer upon ATP binding. Assembling and dissambling the active center during each catalytic cycle provides an effective means to prevent ATP hydrolysis.</text>
</comment>
<comment type="similarity">
    <text evidence="1">Belongs to the adenylate kinase family.</text>
</comment>
<feature type="chain" id="PRO_1000058827" description="Adenylate kinase">
    <location>
        <begin position="1"/>
        <end position="218"/>
    </location>
</feature>
<feature type="region of interest" description="NMP" evidence="1">
    <location>
        <begin position="30"/>
        <end position="59"/>
    </location>
</feature>
<feature type="region of interest" description="LID" evidence="1">
    <location>
        <begin position="122"/>
        <end position="159"/>
    </location>
</feature>
<feature type="binding site" evidence="1">
    <location>
        <begin position="10"/>
        <end position="15"/>
    </location>
    <ligand>
        <name>ATP</name>
        <dbReference type="ChEBI" id="CHEBI:30616"/>
    </ligand>
</feature>
<feature type="binding site" evidence="1">
    <location>
        <position position="31"/>
    </location>
    <ligand>
        <name>AMP</name>
        <dbReference type="ChEBI" id="CHEBI:456215"/>
    </ligand>
</feature>
<feature type="binding site" evidence="1">
    <location>
        <position position="36"/>
    </location>
    <ligand>
        <name>AMP</name>
        <dbReference type="ChEBI" id="CHEBI:456215"/>
    </ligand>
</feature>
<feature type="binding site" evidence="1">
    <location>
        <begin position="57"/>
        <end position="59"/>
    </location>
    <ligand>
        <name>AMP</name>
        <dbReference type="ChEBI" id="CHEBI:456215"/>
    </ligand>
</feature>
<feature type="binding site" evidence="1">
    <location>
        <position position="92"/>
    </location>
    <ligand>
        <name>AMP</name>
        <dbReference type="ChEBI" id="CHEBI:456215"/>
    </ligand>
</feature>
<feature type="binding site" evidence="1">
    <location>
        <position position="123"/>
    </location>
    <ligand>
        <name>ATP</name>
        <dbReference type="ChEBI" id="CHEBI:30616"/>
    </ligand>
</feature>
<feature type="binding site" evidence="1">
    <location>
        <begin position="132"/>
        <end position="133"/>
    </location>
    <ligand>
        <name>ATP</name>
        <dbReference type="ChEBI" id="CHEBI:30616"/>
    </ligand>
</feature>
<feature type="binding site" evidence="1">
    <location>
        <position position="156"/>
    </location>
    <ligand>
        <name>AMP</name>
        <dbReference type="ChEBI" id="CHEBI:456215"/>
    </ligand>
</feature>
<feature type="binding site" evidence="1">
    <location>
        <position position="167"/>
    </location>
    <ligand>
        <name>AMP</name>
        <dbReference type="ChEBI" id="CHEBI:456215"/>
    </ligand>
</feature>
<feature type="binding site" evidence="1">
    <location>
        <position position="202"/>
    </location>
    <ligand>
        <name>ATP</name>
        <dbReference type="ChEBI" id="CHEBI:30616"/>
    </ligand>
</feature>
<reference key="1">
    <citation type="journal article" date="2007" name="PLoS ONE">
        <title>Genome sequencing shows that European isolates of Francisella tularensis subspecies tularensis are almost identical to US laboratory strain Schu S4.</title>
        <authorList>
            <person name="Chaudhuri R.R."/>
            <person name="Ren C.-P."/>
            <person name="Desmond L."/>
            <person name="Vincent G.A."/>
            <person name="Silman N.J."/>
            <person name="Brehm J.K."/>
            <person name="Elmore M.J."/>
            <person name="Hudson M.J."/>
            <person name="Forsman M."/>
            <person name="Isherwood K.E."/>
            <person name="Gurycova D."/>
            <person name="Minton N.P."/>
            <person name="Titball R.W."/>
            <person name="Pallen M.J."/>
            <person name="Vipond R."/>
        </authorList>
    </citation>
    <scope>NUCLEOTIDE SEQUENCE [LARGE SCALE GENOMIC DNA]</scope>
    <source>
        <strain>FSC 198</strain>
    </source>
</reference>
<dbReference type="EC" id="2.7.4.3" evidence="1"/>
<dbReference type="EMBL" id="AM286280">
    <property type="protein sequence ID" value="CAL09177.1"/>
    <property type="molecule type" value="Genomic_DNA"/>
</dbReference>
<dbReference type="RefSeq" id="WP_003018613.1">
    <property type="nucleotide sequence ID" value="NC_008245.1"/>
</dbReference>
<dbReference type="SMR" id="Q14H66"/>
<dbReference type="KEGG" id="ftf:FTF1161"/>
<dbReference type="HOGENOM" id="CLU_032354_1_2_6"/>
<dbReference type="UniPathway" id="UPA00588">
    <property type="reaction ID" value="UER00649"/>
</dbReference>
<dbReference type="GO" id="GO:0005737">
    <property type="term" value="C:cytoplasm"/>
    <property type="evidence" value="ECO:0007669"/>
    <property type="project" value="UniProtKB-SubCell"/>
</dbReference>
<dbReference type="GO" id="GO:0004017">
    <property type="term" value="F:adenylate kinase activity"/>
    <property type="evidence" value="ECO:0007669"/>
    <property type="project" value="UniProtKB-UniRule"/>
</dbReference>
<dbReference type="GO" id="GO:0005524">
    <property type="term" value="F:ATP binding"/>
    <property type="evidence" value="ECO:0007669"/>
    <property type="project" value="UniProtKB-UniRule"/>
</dbReference>
<dbReference type="GO" id="GO:0044209">
    <property type="term" value="P:AMP salvage"/>
    <property type="evidence" value="ECO:0007669"/>
    <property type="project" value="UniProtKB-UniRule"/>
</dbReference>
<dbReference type="CDD" id="cd01428">
    <property type="entry name" value="ADK"/>
    <property type="match status" value="1"/>
</dbReference>
<dbReference type="FunFam" id="3.40.50.300:FF:000106">
    <property type="entry name" value="Adenylate kinase mitochondrial"/>
    <property type="match status" value="1"/>
</dbReference>
<dbReference type="Gene3D" id="3.40.50.300">
    <property type="entry name" value="P-loop containing nucleotide triphosphate hydrolases"/>
    <property type="match status" value="1"/>
</dbReference>
<dbReference type="HAMAP" id="MF_00235">
    <property type="entry name" value="Adenylate_kinase_Adk"/>
    <property type="match status" value="1"/>
</dbReference>
<dbReference type="InterPro" id="IPR006259">
    <property type="entry name" value="Adenyl_kin_sub"/>
</dbReference>
<dbReference type="InterPro" id="IPR000850">
    <property type="entry name" value="Adenylat/UMP-CMP_kin"/>
</dbReference>
<dbReference type="InterPro" id="IPR007862">
    <property type="entry name" value="Adenylate_kinase_lid-dom"/>
</dbReference>
<dbReference type="InterPro" id="IPR027417">
    <property type="entry name" value="P-loop_NTPase"/>
</dbReference>
<dbReference type="NCBIfam" id="TIGR01351">
    <property type="entry name" value="adk"/>
    <property type="match status" value="1"/>
</dbReference>
<dbReference type="NCBIfam" id="NF001379">
    <property type="entry name" value="PRK00279.1-1"/>
    <property type="match status" value="1"/>
</dbReference>
<dbReference type="NCBIfam" id="NF001380">
    <property type="entry name" value="PRK00279.1-2"/>
    <property type="match status" value="1"/>
</dbReference>
<dbReference type="NCBIfam" id="NF001381">
    <property type="entry name" value="PRK00279.1-3"/>
    <property type="match status" value="1"/>
</dbReference>
<dbReference type="PANTHER" id="PTHR23359">
    <property type="entry name" value="NUCLEOTIDE KINASE"/>
    <property type="match status" value="1"/>
</dbReference>
<dbReference type="Pfam" id="PF00406">
    <property type="entry name" value="ADK"/>
    <property type="match status" value="1"/>
</dbReference>
<dbReference type="Pfam" id="PF05191">
    <property type="entry name" value="ADK_lid"/>
    <property type="match status" value="1"/>
</dbReference>
<dbReference type="PRINTS" id="PR00094">
    <property type="entry name" value="ADENYLTKNASE"/>
</dbReference>
<dbReference type="SUPFAM" id="SSF52540">
    <property type="entry name" value="P-loop containing nucleoside triphosphate hydrolases"/>
    <property type="match status" value="1"/>
</dbReference>
<name>KAD_FRAT1</name>
<organism>
    <name type="scientific">Francisella tularensis subsp. tularensis (strain FSC 198)</name>
    <dbReference type="NCBI Taxonomy" id="393115"/>
    <lineage>
        <taxon>Bacteria</taxon>
        <taxon>Pseudomonadati</taxon>
        <taxon>Pseudomonadota</taxon>
        <taxon>Gammaproteobacteria</taxon>
        <taxon>Thiotrichales</taxon>
        <taxon>Francisellaceae</taxon>
        <taxon>Francisella</taxon>
    </lineage>
</organism>
<sequence length="218" mass="24362">MRIILLGAPGAGKGTQAKIIEQKYNIAHISTGDMIRETIKSGSALGQELKKVLDAGELVSDEFIIKIVKDRISKNDCNNGFLLDGVPRTIPQAQELDKLGVNIDYIVEVDVADNLLIERITGRRIHPASGRTYHTKFNPPKVADKDDVTGEPLITRTDDNEDTVKQRLSVYHAQTAKLIDFYRNFSSTNTKIPKYIKINGDQAVEKVSQDIFDQLNKR</sequence>
<proteinExistence type="inferred from homology"/>
<evidence type="ECO:0000255" key="1">
    <source>
        <dbReference type="HAMAP-Rule" id="MF_00235"/>
    </source>
</evidence>
<keyword id="KW-0067">ATP-binding</keyword>
<keyword id="KW-0963">Cytoplasm</keyword>
<keyword id="KW-0418">Kinase</keyword>
<keyword id="KW-0545">Nucleotide biosynthesis</keyword>
<keyword id="KW-0547">Nucleotide-binding</keyword>
<keyword id="KW-0808">Transferase</keyword>